<organism>
    <name type="scientific">Pseudomonas savastanoi pv. phaseolicola (strain 1448A / Race 6)</name>
    <name type="common">Pseudomonas syringae pv. phaseolicola (strain 1448A / Race 6)</name>
    <dbReference type="NCBI Taxonomy" id="264730"/>
    <lineage>
        <taxon>Bacteria</taxon>
        <taxon>Pseudomonadati</taxon>
        <taxon>Pseudomonadota</taxon>
        <taxon>Gammaproteobacteria</taxon>
        <taxon>Pseudomonadales</taxon>
        <taxon>Pseudomonadaceae</taxon>
        <taxon>Pseudomonas</taxon>
    </lineage>
</organism>
<proteinExistence type="inferred from homology"/>
<feature type="chain" id="PRO_0000382988" description="Probable 4-amino-4-deoxy-L-arabinose-phosphoundecaprenol flippase subunit ArnE">
    <location>
        <begin position="1"/>
        <end position="114"/>
    </location>
</feature>
<feature type="transmembrane region" description="Helical" evidence="1">
    <location>
        <begin position="41"/>
        <end position="61"/>
    </location>
</feature>
<feature type="transmembrane region" description="Helical" evidence="1">
    <location>
        <begin position="64"/>
        <end position="84"/>
    </location>
</feature>
<feature type="transmembrane region" description="Helical" evidence="1">
    <location>
        <begin position="91"/>
        <end position="111"/>
    </location>
</feature>
<protein>
    <recommendedName>
        <fullName evidence="1">Probable 4-amino-4-deoxy-L-arabinose-phosphoundecaprenol flippase subunit ArnE</fullName>
        <shortName evidence="1">L-Ara4N-phosphoundecaprenol flippase subunit ArnE</shortName>
    </recommendedName>
    <alternativeName>
        <fullName evidence="1">Undecaprenyl phosphate-aminoarabinose flippase subunit ArnE</fullName>
    </alternativeName>
</protein>
<name>ARNE_PSE14</name>
<reference key="1">
    <citation type="journal article" date="2005" name="J. Bacteriol.">
        <title>Whole-genome sequence analysis of Pseudomonas syringae pv. phaseolicola 1448A reveals divergence among pathovars in genes involved in virulence and transposition.</title>
        <authorList>
            <person name="Joardar V."/>
            <person name="Lindeberg M."/>
            <person name="Jackson R.W."/>
            <person name="Selengut J."/>
            <person name="Dodson R."/>
            <person name="Brinkac L.M."/>
            <person name="Daugherty S.C."/>
            <person name="DeBoy R.T."/>
            <person name="Durkin A.S."/>
            <person name="Gwinn Giglio M."/>
            <person name="Madupu R."/>
            <person name="Nelson W.C."/>
            <person name="Rosovitz M.J."/>
            <person name="Sullivan S.A."/>
            <person name="Crabtree J."/>
            <person name="Creasy T."/>
            <person name="Davidsen T.M."/>
            <person name="Haft D.H."/>
            <person name="Zafar N."/>
            <person name="Zhou L."/>
            <person name="Halpin R."/>
            <person name="Holley T."/>
            <person name="Khouri H.M."/>
            <person name="Feldblyum T.V."/>
            <person name="White O."/>
            <person name="Fraser C.M."/>
            <person name="Chatterjee A.K."/>
            <person name="Cartinhour S."/>
            <person name="Schneider D."/>
            <person name="Mansfield J.W."/>
            <person name="Collmer A."/>
            <person name="Buell R."/>
        </authorList>
    </citation>
    <scope>NUCLEOTIDE SEQUENCE [LARGE SCALE GENOMIC DNA]</scope>
    <source>
        <strain>1448A / Race 6</strain>
    </source>
</reference>
<keyword id="KW-0997">Cell inner membrane</keyword>
<keyword id="KW-1003">Cell membrane</keyword>
<keyword id="KW-0441">Lipid A biosynthesis</keyword>
<keyword id="KW-0444">Lipid biosynthesis</keyword>
<keyword id="KW-0443">Lipid metabolism</keyword>
<keyword id="KW-0448">Lipopolysaccharide biosynthesis</keyword>
<keyword id="KW-0472">Membrane</keyword>
<keyword id="KW-0812">Transmembrane</keyword>
<keyword id="KW-1133">Transmembrane helix</keyword>
<keyword id="KW-0813">Transport</keyword>
<accession>Q48HY8</accession>
<gene>
    <name evidence="1" type="primary">arnE</name>
    <name type="ordered locus">PSPPH_2807</name>
</gene>
<evidence type="ECO:0000255" key="1">
    <source>
        <dbReference type="HAMAP-Rule" id="MF_01869"/>
    </source>
</evidence>
<sequence>MTWLMLLSACLLTCLGQIAQKYAVEGWRETFPGVLAALRSMWLWLAIACLGLGLLVWLLVLQRMDVGIAYPMLGLNFVLITLVGRYVFKEPVDPQHWLGIALILVGVFQLGRQA</sequence>
<comment type="function">
    <text evidence="1">Translocates 4-amino-4-deoxy-L-arabinose-phosphoundecaprenol (alpha-L-Ara4N-phosphoundecaprenol) from the cytoplasmic to the periplasmic side of the inner membrane.</text>
</comment>
<comment type="pathway">
    <text evidence="1">Bacterial outer membrane biogenesis; lipopolysaccharide biosynthesis.</text>
</comment>
<comment type="subunit">
    <text evidence="1">Heterodimer of ArnE and ArnF.</text>
</comment>
<comment type="subcellular location">
    <subcellularLocation>
        <location evidence="1">Cell inner membrane</location>
        <topology evidence="1">Multi-pass membrane protein</topology>
    </subcellularLocation>
</comment>
<comment type="similarity">
    <text evidence="1">Belongs to the ArnE family.</text>
</comment>
<dbReference type="EMBL" id="CP000058">
    <property type="protein sequence ID" value="AAZ33162.1"/>
    <property type="molecule type" value="Genomic_DNA"/>
</dbReference>
<dbReference type="RefSeq" id="WP_004662222.1">
    <property type="nucleotide sequence ID" value="NC_005773.3"/>
</dbReference>
<dbReference type="SMR" id="Q48HY8"/>
<dbReference type="KEGG" id="psp:PSPPH_2807"/>
<dbReference type="eggNOG" id="COG2076">
    <property type="taxonomic scope" value="Bacteria"/>
</dbReference>
<dbReference type="HOGENOM" id="CLU_131462_5_1_6"/>
<dbReference type="UniPathway" id="UPA00030"/>
<dbReference type="Proteomes" id="UP000000551">
    <property type="component" value="Chromosome"/>
</dbReference>
<dbReference type="GO" id="GO:0005886">
    <property type="term" value="C:plasma membrane"/>
    <property type="evidence" value="ECO:0007669"/>
    <property type="project" value="UniProtKB-SubCell"/>
</dbReference>
<dbReference type="GO" id="GO:1901505">
    <property type="term" value="F:carbohydrate derivative transmembrane transporter activity"/>
    <property type="evidence" value="ECO:0007669"/>
    <property type="project" value="InterPro"/>
</dbReference>
<dbReference type="GO" id="GO:0009245">
    <property type="term" value="P:lipid A biosynthetic process"/>
    <property type="evidence" value="ECO:0007669"/>
    <property type="project" value="UniProtKB-UniRule"/>
</dbReference>
<dbReference type="GO" id="GO:0009103">
    <property type="term" value="P:lipopolysaccharide biosynthetic process"/>
    <property type="evidence" value="ECO:0007669"/>
    <property type="project" value="UniProtKB-UniRule"/>
</dbReference>
<dbReference type="FunFam" id="1.10.3730.20:FF:000002">
    <property type="entry name" value="Probable 4-amino-4-deoxy-L-arabinose-phosphoundecaprenol flippase subunit ArnE"/>
    <property type="match status" value="1"/>
</dbReference>
<dbReference type="Gene3D" id="1.10.3730.20">
    <property type="match status" value="1"/>
</dbReference>
<dbReference type="HAMAP" id="MF_01869">
    <property type="entry name" value="Flippase_ArnE"/>
    <property type="match status" value="1"/>
</dbReference>
<dbReference type="InterPro" id="IPR000620">
    <property type="entry name" value="EamA_dom"/>
</dbReference>
<dbReference type="InterPro" id="IPR022883">
    <property type="entry name" value="Flippase_ArnE"/>
</dbReference>
<dbReference type="InterPro" id="IPR000390">
    <property type="entry name" value="Small_drug/metabolite_transptr"/>
</dbReference>
<dbReference type="NCBIfam" id="NF011625">
    <property type="entry name" value="PRK15051.1"/>
    <property type="match status" value="1"/>
</dbReference>
<dbReference type="PANTHER" id="PTHR30561:SF23">
    <property type="entry name" value="4-AMINO-4-DEOXY-L-ARABINOSE-PHOSPHOUNDECAPRENOL FLIPPASE SUBUNIT ARNE-RELATED"/>
    <property type="match status" value="1"/>
</dbReference>
<dbReference type="PANTHER" id="PTHR30561">
    <property type="entry name" value="SMR FAMILY PROTON-DEPENDENT DRUG EFFLUX TRANSPORTER SUGE"/>
    <property type="match status" value="1"/>
</dbReference>
<dbReference type="Pfam" id="PF00892">
    <property type="entry name" value="EamA"/>
    <property type="match status" value="1"/>
</dbReference>
<dbReference type="SUPFAM" id="SSF103481">
    <property type="entry name" value="Multidrug resistance efflux transporter EmrE"/>
    <property type="match status" value="1"/>
</dbReference>